<comment type="subcellular location">
    <subcellularLocation>
        <location evidence="2">Nucleus</location>
    </subcellularLocation>
</comment>
<comment type="alternative products">
    <event type="alternative splicing"/>
    <isoform>
        <id>Q9SJW0-1</id>
        <name>1</name>
        <sequence type="displayed"/>
    </isoform>
    <isoform>
        <id>Q9SJW0-2</id>
        <name>2</name>
        <sequence type="described" ref="VSP_058433"/>
    </isoform>
</comment>
<comment type="similarity">
    <text evidence="4">Belongs to the MYB-CC family.</text>
</comment>
<protein>
    <recommendedName>
        <fullName evidence="4">Myb family transcription factor PHL7</fullName>
    </recommendedName>
    <alternativeName>
        <fullName evidence="4">Protein PHR1-LIKE 7</fullName>
    </alternativeName>
</protein>
<sequence>MEADNGGPNSSHASKQRLRWTHELHERFVDAVAQLGGPDRATPKGVLRVMGVQGLTIYHVKSHLQKYRLAKYLPDSSSEGKKTDKKESGDMLSGLDGSSGMQITEALKLQMEVQKRLHEQLEVQRQLQLRIEAQGKYLKKIIEEQQRLSGVLGEPSAPVTGDSDPATPAPTSESPLQDKSGKDCGPDKSLSVDESLSSYREPLTPDSGCNIGSPDESTGEERLSKKPRLVRGAAGYTPDIVVGHPILESGLNTSYHQSDHVLAFDQPSTSLLGAEEQLDKVSGDNL</sequence>
<proteinExistence type="evidence at transcript level"/>
<accession>Q9SJW0</accession>
<accession>F4IM72</accession>
<keyword id="KW-0025">Alternative splicing</keyword>
<keyword id="KW-0175">Coiled coil</keyword>
<keyword id="KW-0238">DNA-binding</keyword>
<keyword id="KW-0539">Nucleus</keyword>
<keyword id="KW-1185">Reference proteome</keyword>
<keyword id="KW-0804">Transcription</keyword>
<keyword id="KW-0805">Transcription regulation</keyword>
<reference key="1">
    <citation type="journal article" date="1999" name="Nature">
        <title>Sequence and analysis of chromosome 2 of the plant Arabidopsis thaliana.</title>
        <authorList>
            <person name="Lin X."/>
            <person name="Kaul S."/>
            <person name="Rounsley S.D."/>
            <person name="Shea T.P."/>
            <person name="Benito M.-I."/>
            <person name="Town C.D."/>
            <person name="Fujii C.Y."/>
            <person name="Mason T.M."/>
            <person name="Bowman C.L."/>
            <person name="Barnstead M.E."/>
            <person name="Feldblyum T.V."/>
            <person name="Buell C.R."/>
            <person name="Ketchum K.A."/>
            <person name="Lee J.J."/>
            <person name="Ronning C.M."/>
            <person name="Koo H.L."/>
            <person name="Moffat K.S."/>
            <person name="Cronin L.A."/>
            <person name="Shen M."/>
            <person name="Pai G."/>
            <person name="Van Aken S."/>
            <person name="Umayam L."/>
            <person name="Tallon L.J."/>
            <person name="Gill J.E."/>
            <person name="Adams M.D."/>
            <person name="Carrera A.J."/>
            <person name="Creasy T.H."/>
            <person name="Goodman H.M."/>
            <person name="Somerville C.R."/>
            <person name="Copenhaver G.P."/>
            <person name="Preuss D."/>
            <person name="Nierman W.C."/>
            <person name="White O."/>
            <person name="Eisen J.A."/>
            <person name="Salzberg S.L."/>
            <person name="Fraser C.M."/>
            <person name="Venter J.C."/>
        </authorList>
    </citation>
    <scope>NUCLEOTIDE SEQUENCE [LARGE SCALE GENOMIC DNA]</scope>
    <source>
        <strain>cv. Columbia</strain>
    </source>
</reference>
<reference key="2">
    <citation type="journal article" date="2017" name="Plant J.">
        <title>Araport11: a complete reannotation of the Arabidopsis thaliana reference genome.</title>
        <authorList>
            <person name="Cheng C.Y."/>
            <person name="Krishnakumar V."/>
            <person name="Chan A.P."/>
            <person name="Thibaud-Nissen F."/>
            <person name="Schobel S."/>
            <person name="Town C.D."/>
        </authorList>
    </citation>
    <scope>GENOME REANNOTATION</scope>
    <source>
        <strain>cv. Columbia</strain>
    </source>
</reference>
<reference key="3">
    <citation type="journal article" date="2003" name="Science">
        <title>Empirical analysis of transcriptional activity in the Arabidopsis genome.</title>
        <authorList>
            <person name="Yamada K."/>
            <person name="Lim J."/>
            <person name="Dale J.M."/>
            <person name="Chen H."/>
            <person name="Shinn P."/>
            <person name="Palm C.J."/>
            <person name="Southwick A.M."/>
            <person name="Wu H.C."/>
            <person name="Kim C.J."/>
            <person name="Nguyen M."/>
            <person name="Pham P.K."/>
            <person name="Cheuk R.F."/>
            <person name="Karlin-Newmann G."/>
            <person name="Liu S.X."/>
            <person name="Lam B."/>
            <person name="Sakano H."/>
            <person name="Wu T."/>
            <person name="Yu G."/>
            <person name="Miranda M."/>
            <person name="Quach H.L."/>
            <person name="Tripp M."/>
            <person name="Chang C.H."/>
            <person name="Lee J.M."/>
            <person name="Toriumi M.J."/>
            <person name="Chan M.M."/>
            <person name="Tang C.C."/>
            <person name="Onodera C.S."/>
            <person name="Deng J.M."/>
            <person name="Akiyama K."/>
            <person name="Ansari Y."/>
            <person name="Arakawa T."/>
            <person name="Banh J."/>
            <person name="Banno F."/>
            <person name="Bowser L."/>
            <person name="Brooks S.Y."/>
            <person name="Carninci P."/>
            <person name="Chao Q."/>
            <person name="Choy N."/>
            <person name="Enju A."/>
            <person name="Goldsmith A.D."/>
            <person name="Gurjal M."/>
            <person name="Hansen N.F."/>
            <person name="Hayashizaki Y."/>
            <person name="Johnson-Hopson C."/>
            <person name="Hsuan V.W."/>
            <person name="Iida K."/>
            <person name="Karnes M."/>
            <person name="Khan S."/>
            <person name="Koesema E."/>
            <person name="Ishida J."/>
            <person name="Jiang P.X."/>
            <person name="Jones T."/>
            <person name="Kawai J."/>
            <person name="Kamiya A."/>
            <person name="Meyers C."/>
            <person name="Nakajima M."/>
            <person name="Narusaka M."/>
            <person name="Seki M."/>
            <person name="Sakurai T."/>
            <person name="Satou M."/>
            <person name="Tamse R."/>
            <person name="Vaysberg M."/>
            <person name="Wallender E.K."/>
            <person name="Wong C."/>
            <person name="Yamamura Y."/>
            <person name="Yuan S."/>
            <person name="Shinozaki K."/>
            <person name="Davis R.W."/>
            <person name="Theologis A."/>
            <person name="Ecker J.R."/>
        </authorList>
    </citation>
    <scope>NUCLEOTIDE SEQUENCE [LARGE SCALE MRNA] (ISOFORM 1)</scope>
    <source>
        <strain>cv. Columbia</strain>
    </source>
</reference>
<reference key="4">
    <citation type="submission" date="2002-03" db="EMBL/GenBank/DDBJ databases">
        <title>Full-length cDNA from Arabidopsis thaliana.</title>
        <authorList>
            <person name="Brover V.V."/>
            <person name="Troukhan M.E."/>
            <person name="Alexandrov N.A."/>
            <person name="Lu Y.-P."/>
            <person name="Flavell R.B."/>
            <person name="Feldmann K.A."/>
        </authorList>
    </citation>
    <scope>NUCLEOTIDE SEQUENCE [LARGE SCALE MRNA] (ISOFORM 1)</scope>
</reference>
<reference key="5">
    <citation type="journal article" date="2001" name="Genes Dev.">
        <title>A conserved MYB transcription factor involved in phosphate starvation signaling both in vascular plants and in unicellular algae.</title>
        <authorList>
            <person name="Rubio V."/>
            <person name="Linhares F."/>
            <person name="Solano R."/>
            <person name="Martin A.C."/>
            <person name="Iglesias J."/>
            <person name="Leyva A."/>
            <person name="Paz-Ares J."/>
        </authorList>
    </citation>
    <scope>GENE FAMILY</scope>
</reference>
<feature type="chain" id="PRO_0000436864" description="Myb family transcription factor PHL7">
    <location>
        <begin position="1"/>
        <end position="286"/>
    </location>
</feature>
<feature type="domain" description="HTH myb-type" evidence="2">
    <location>
        <begin position="12"/>
        <end position="72"/>
    </location>
</feature>
<feature type="DNA-binding region" description="H-T-H motif" evidence="2">
    <location>
        <begin position="43"/>
        <end position="68"/>
    </location>
</feature>
<feature type="region of interest" description="Disordered" evidence="3">
    <location>
        <begin position="74"/>
        <end position="97"/>
    </location>
</feature>
<feature type="region of interest" description="Disordered" evidence="3">
    <location>
        <begin position="152"/>
        <end position="227"/>
    </location>
</feature>
<feature type="coiled-coil region" evidence="1">
    <location>
        <begin position="104"/>
        <end position="124"/>
    </location>
</feature>
<feature type="short sequence motif" description="LHEQLE" evidence="4">
    <location>
        <begin position="117"/>
        <end position="122"/>
    </location>
</feature>
<feature type="compositionally biased region" description="Basic and acidic residues" evidence="3">
    <location>
        <begin position="78"/>
        <end position="89"/>
    </location>
</feature>
<feature type="splice variant" id="VSP_058433" description="In isoform 2.">
    <location>
        <begin position="1"/>
        <end position="49"/>
    </location>
</feature>
<name>PHL7_ARATH</name>
<organism>
    <name type="scientific">Arabidopsis thaliana</name>
    <name type="common">Mouse-ear cress</name>
    <dbReference type="NCBI Taxonomy" id="3702"/>
    <lineage>
        <taxon>Eukaryota</taxon>
        <taxon>Viridiplantae</taxon>
        <taxon>Streptophyta</taxon>
        <taxon>Embryophyta</taxon>
        <taxon>Tracheophyta</taxon>
        <taxon>Spermatophyta</taxon>
        <taxon>Magnoliopsida</taxon>
        <taxon>eudicotyledons</taxon>
        <taxon>Gunneridae</taxon>
        <taxon>Pentapetalae</taxon>
        <taxon>rosids</taxon>
        <taxon>malvids</taxon>
        <taxon>Brassicales</taxon>
        <taxon>Brassicaceae</taxon>
        <taxon>Camelineae</taxon>
        <taxon>Arabidopsis</taxon>
    </lineage>
</organism>
<gene>
    <name evidence="4" type="primary">PHL7</name>
    <name evidence="5" type="ordered locus">At2g01060</name>
    <name evidence="6" type="ORF">F23H14.3</name>
</gene>
<evidence type="ECO:0000255" key="1"/>
<evidence type="ECO:0000255" key="2">
    <source>
        <dbReference type="PROSITE-ProRule" id="PRU00625"/>
    </source>
</evidence>
<evidence type="ECO:0000256" key="3">
    <source>
        <dbReference type="SAM" id="MobiDB-lite"/>
    </source>
</evidence>
<evidence type="ECO:0000305" key="4"/>
<evidence type="ECO:0000312" key="5">
    <source>
        <dbReference type="Araport" id="AT2G01060"/>
    </source>
</evidence>
<evidence type="ECO:0000312" key="6">
    <source>
        <dbReference type="EMBL" id="AAF18654.1"/>
    </source>
</evidence>
<dbReference type="EMBL" id="AC006837">
    <property type="protein sequence ID" value="AAF18654.1"/>
    <property type="molecule type" value="Genomic_DNA"/>
</dbReference>
<dbReference type="EMBL" id="CP002685">
    <property type="protein sequence ID" value="AEC05392.1"/>
    <property type="molecule type" value="Genomic_DNA"/>
</dbReference>
<dbReference type="EMBL" id="CP002685">
    <property type="protein sequence ID" value="AEC05393.1"/>
    <property type="molecule type" value="Genomic_DNA"/>
</dbReference>
<dbReference type="EMBL" id="AF370550">
    <property type="protein sequence ID" value="AAK48977.1"/>
    <property type="molecule type" value="mRNA"/>
</dbReference>
<dbReference type="EMBL" id="BT000013">
    <property type="protein sequence ID" value="AAN15332.1"/>
    <property type="molecule type" value="mRNA"/>
</dbReference>
<dbReference type="EMBL" id="AY084725">
    <property type="protein sequence ID" value="AAM61299.1"/>
    <property type="molecule type" value="mRNA"/>
</dbReference>
<dbReference type="PIR" id="B84420">
    <property type="entry name" value="B84420"/>
</dbReference>
<dbReference type="RefSeq" id="NP_178216.1">
    <molecule id="Q9SJW0-1"/>
    <property type="nucleotide sequence ID" value="NM_126168.5"/>
</dbReference>
<dbReference type="RefSeq" id="NP_973385.1">
    <molecule id="Q9SJW0-2"/>
    <property type="nucleotide sequence ID" value="NM_201656.2"/>
</dbReference>
<dbReference type="SMR" id="Q9SJW0"/>
<dbReference type="FunCoup" id="Q9SJW0">
    <property type="interactions" value="1952"/>
</dbReference>
<dbReference type="IntAct" id="Q9SJW0">
    <property type="interactions" value="4"/>
</dbReference>
<dbReference type="STRING" id="3702.Q9SJW0"/>
<dbReference type="GlyGen" id="Q9SJW0">
    <property type="glycosylation" value="1 site"/>
</dbReference>
<dbReference type="iPTMnet" id="Q9SJW0"/>
<dbReference type="PaxDb" id="3702-AT2G01060.1"/>
<dbReference type="ProteomicsDB" id="236748">
    <molecule id="Q9SJW0-1"/>
</dbReference>
<dbReference type="EnsemblPlants" id="AT2G01060.1">
    <molecule id="Q9SJW0-1"/>
    <property type="protein sequence ID" value="AT2G01060.1"/>
    <property type="gene ID" value="AT2G01060"/>
</dbReference>
<dbReference type="EnsemblPlants" id="AT2G01060.2">
    <molecule id="Q9SJW0-2"/>
    <property type="protein sequence ID" value="AT2G01060.2"/>
    <property type="gene ID" value="AT2G01060"/>
</dbReference>
<dbReference type="GeneID" id="814630"/>
<dbReference type="Gramene" id="AT2G01060.1">
    <molecule id="Q9SJW0-1"/>
    <property type="protein sequence ID" value="AT2G01060.1"/>
    <property type="gene ID" value="AT2G01060"/>
</dbReference>
<dbReference type="Gramene" id="AT2G01060.2">
    <molecule id="Q9SJW0-2"/>
    <property type="protein sequence ID" value="AT2G01060.2"/>
    <property type="gene ID" value="AT2G01060"/>
</dbReference>
<dbReference type="KEGG" id="ath:AT2G01060"/>
<dbReference type="Araport" id="AT2G01060"/>
<dbReference type="TAIR" id="AT2G01060"/>
<dbReference type="eggNOG" id="ENOG502QU84">
    <property type="taxonomic scope" value="Eukaryota"/>
</dbReference>
<dbReference type="HOGENOM" id="CLU_053944_0_0_1"/>
<dbReference type="InParanoid" id="Q9SJW0"/>
<dbReference type="OMA" id="DATICEN"/>
<dbReference type="OrthoDB" id="551907at2759"/>
<dbReference type="PhylomeDB" id="Q9SJW0"/>
<dbReference type="PRO" id="PR:Q9SJW0"/>
<dbReference type="Proteomes" id="UP000006548">
    <property type="component" value="Chromosome 2"/>
</dbReference>
<dbReference type="ExpressionAtlas" id="Q9SJW0">
    <property type="expression patterns" value="baseline and differential"/>
</dbReference>
<dbReference type="GO" id="GO:0005634">
    <property type="term" value="C:nucleus"/>
    <property type="evidence" value="ECO:0007669"/>
    <property type="project" value="UniProtKB-SubCell"/>
</dbReference>
<dbReference type="GO" id="GO:0003677">
    <property type="term" value="F:DNA binding"/>
    <property type="evidence" value="ECO:0007669"/>
    <property type="project" value="UniProtKB-KW"/>
</dbReference>
<dbReference type="GO" id="GO:0003700">
    <property type="term" value="F:DNA-binding transcription factor activity"/>
    <property type="evidence" value="ECO:0000250"/>
    <property type="project" value="TAIR"/>
</dbReference>
<dbReference type="GO" id="GO:0006355">
    <property type="term" value="P:regulation of DNA-templated transcription"/>
    <property type="evidence" value="ECO:0000304"/>
    <property type="project" value="TAIR"/>
</dbReference>
<dbReference type="FunFam" id="1.10.10.60:FF:000002">
    <property type="entry name" value="Myb family transcription factor"/>
    <property type="match status" value="1"/>
</dbReference>
<dbReference type="Gene3D" id="1.10.10.60">
    <property type="entry name" value="Homeodomain-like"/>
    <property type="match status" value="1"/>
</dbReference>
<dbReference type="InterPro" id="IPR009057">
    <property type="entry name" value="Homeodomain-like_sf"/>
</dbReference>
<dbReference type="InterPro" id="IPR025756">
    <property type="entry name" value="Myb_CC_LHEQLE"/>
</dbReference>
<dbReference type="InterPro" id="IPR017930">
    <property type="entry name" value="Myb_dom"/>
</dbReference>
<dbReference type="InterPro" id="IPR006447">
    <property type="entry name" value="Myb_dom_plants"/>
</dbReference>
<dbReference type="InterPro" id="IPR046955">
    <property type="entry name" value="PHR1-like"/>
</dbReference>
<dbReference type="InterPro" id="IPR001005">
    <property type="entry name" value="SANT/Myb"/>
</dbReference>
<dbReference type="NCBIfam" id="TIGR01557">
    <property type="entry name" value="myb_SHAQKYF"/>
    <property type="match status" value="1"/>
</dbReference>
<dbReference type="PANTHER" id="PTHR31499">
    <property type="entry name" value="MYB FAMILY TRANSCRIPTION FACTOR PHL11"/>
    <property type="match status" value="1"/>
</dbReference>
<dbReference type="PANTHER" id="PTHR31499:SF83">
    <property type="entry name" value="MYB FAMILY TRANSCRIPTION FACTOR PHL7-LIKE ISOFORM X2"/>
    <property type="match status" value="1"/>
</dbReference>
<dbReference type="Pfam" id="PF14379">
    <property type="entry name" value="Myb_CC_LHEQLE"/>
    <property type="match status" value="1"/>
</dbReference>
<dbReference type="Pfam" id="PF00249">
    <property type="entry name" value="Myb_DNA-binding"/>
    <property type="match status" value="1"/>
</dbReference>
<dbReference type="SUPFAM" id="SSF46689">
    <property type="entry name" value="Homeodomain-like"/>
    <property type="match status" value="1"/>
</dbReference>
<dbReference type="PROSITE" id="PS51294">
    <property type="entry name" value="HTH_MYB"/>
    <property type="match status" value="1"/>
</dbReference>